<dbReference type="EC" id="1.13.11.29"/>
<dbReference type="EMBL" id="AJ583017">
    <property type="protein sequence ID" value="CAE47100.1"/>
    <property type="molecule type" value="mRNA"/>
</dbReference>
<dbReference type="PDB" id="8IN2">
    <property type="method" value="X-ray"/>
    <property type="resolution" value="3.08 A"/>
    <property type="chains" value="A/B=1-268"/>
</dbReference>
<dbReference type="PDBsum" id="8IN2"/>
<dbReference type="SMR" id="Q70FG7"/>
<dbReference type="BioCyc" id="MetaCyc:MONOMER-19377"/>
<dbReference type="UniPathway" id="UPA00278"/>
<dbReference type="GO" id="GO:0005737">
    <property type="term" value="C:cytoplasm"/>
    <property type="evidence" value="ECO:0007669"/>
    <property type="project" value="UniProtKB-SubCell"/>
</dbReference>
<dbReference type="GO" id="GO:0008198">
    <property type="term" value="F:ferrous iron binding"/>
    <property type="evidence" value="ECO:0007669"/>
    <property type="project" value="InterPro"/>
</dbReference>
<dbReference type="GO" id="GO:0050297">
    <property type="term" value="F:stizolobate synthase activity"/>
    <property type="evidence" value="ECO:0000314"/>
    <property type="project" value="UniProtKB"/>
</dbReference>
<dbReference type="GO" id="GO:0008270">
    <property type="term" value="F:zinc ion binding"/>
    <property type="evidence" value="ECO:0007669"/>
    <property type="project" value="InterPro"/>
</dbReference>
<dbReference type="GO" id="GO:0046148">
    <property type="term" value="P:pigment biosynthetic process"/>
    <property type="evidence" value="ECO:0000314"/>
    <property type="project" value="UniProtKB"/>
</dbReference>
<dbReference type="CDD" id="cd07363">
    <property type="entry name" value="45_DOPA_Dioxygenase"/>
    <property type="match status" value="1"/>
</dbReference>
<dbReference type="FunFam" id="3.40.830.10:FF:000003">
    <property type="entry name" value="4,5-DOPA dioxygenase extradiol"/>
    <property type="match status" value="1"/>
</dbReference>
<dbReference type="Gene3D" id="3.40.830.10">
    <property type="entry name" value="LigB-like"/>
    <property type="match status" value="1"/>
</dbReference>
<dbReference type="InterPro" id="IPR014436">
    <property type="entry name" value="Extradiol_dOase_DODA"/>
</dbReference>
<dbReference type="InterPro" id="IPR004183">
    <property type="entry name" value="Xdiol_dOase_suB"/>
</dbReference>
<dbReference type="PANTHER" id="PTHR30096">
    <property type="entry name" value="4,5-DOPA DIOXYGENASE EXTRADIOL-LIKE PROTEIN"/>
    <property type="match status" value="1"/>
</dbReference>
<dbReference type="PANTHER" id="PTHR30096:SF0">
    <property type="entry name" value="4,5-DOPA DIOXYGENASE EXTRADIOL-LIKE PROTEIN"/>
    <property type="match status" value="1"/>
</dbReference>
<dbReference type="Pfam" id="PF02900">
    <property type="entry name" value="LigB"/>
    <property type="match status" value="1"/>
</dbReference>
<dbReference type="PIRSF" id="PIRSF006157">
    <property type="entry name" value="Doxgns_DODA"/>
    <property type="match status" value="1"/>
</dbReference>
<dbReference type="SUPFAM" id="SSF53213">
    <property type="entry name" value="LigB-like"/>
    <property type="match status" value="1"/>
</dbReference>
<evidence type="ECO:0000250" key="1"/>
<evidence type="ECO:0000269" key="2">
    <source>
    </source>
</evidence>
<evidence type="ECO:0000305" key="3"/>
<evidence type="ECO:0000305" key="4">
    <source>
    </source>
</evidence>
<feature type="chain" id="PRO_0000424076" description="4,5-DOPA dioxygenase extradiol">
    <location>
        <begin position="1"/>
        <end position="268"/>
    </location>
</feature>
<feature type="binding site" evidence="1">
    <location>
        <position position="15"/>
    </location>
    <ligand>
        <name>Zn(2+)</name>
        <dbReference type="ChEBI" id="CHEBI:29105"/>
    </ligand>
</feature>
<feature type="binding site" evidence="1">
    <location>
        <position position="53"/>
    </location>
    <ligand>
        <name>Zn(2+)</name>
        <dbReference type="ChEBI" id="CHEBI:29105"/>
    </ligand>
</feature>
<feature type="binding site" evidence="1">
    <location>
        <position position="175"/>
    </location>
    <ligand>
        <name>Zn(2+)</name>
        <dbReference type="ChEBI" id="CHEBI:29105"/>
    </ligand>
</feature>
<feature type="binding site" evidence="1">
    <location>
        <position position="229"/>
    </location>
    <ligand>
        <name>Zn(2+)</name>
        <dbReference type="ChEBI" id="CHEBI:29105"/>
    </ligand>
</feature>
<reference key="1">
    <citation type="journal article" date="2004" name="Plant Physiol.">
        <title>Characterization and functional identification of a novel plant 4,5-extradiol dioxygenase involved in betalain pigment biosynthesis in Portulaca grandiflora.</title>
        <authorList>
            <person name="Christinet L."/>
            <person name="Burdet F.X."/>
            <person name="Zaiko M."/>
            <person name="Hinz U.G."/>
            <person name="Zryd J.-P."/>
        </authorList>
    </citation>
    <scope>NUCLEOTIDE SEQUENCE [MRNA]</scope>
    <source>
        <strain>cv. Bikores Monogerm</strain>
    </source>
</reference>
<reference key="2">
    <citation type="journal article" date="2012" name="Planta">
        <title>Characterization of recombinant Beta vulgaris 4,5-DOPA-extradiol-dioxygenase active in the biosynthesis of betalains.</title>
        <authorList>
            <person name="Gandia-Herrero F."/>
            <person name="Garcia-Carmona F."/>
        </authorList>
    </citation>
    <scope>FUNCTION</scope>
    <scope>CATALYTIC ACTIVITY</scope>
    <scope>BIOPHYSICOCHEMICAL PROPERTIES</scope>
    <scope>SUBUNIT</scope>
</reference>
<proteinExistence type="evidence at protein level"/>
<name>DODA_BETVU</name>
<sequence length="268" mass="29616">MGSEDNIKETFFISHGTPMMAIDDSKPSKKFLESWREKIFSKKPKAILVISAHWETDQPSVNVVDINDTIYDFRGFPARLYQFKYSAPGSPELANRIQDLLAGSGFKSVNTDKKRGLDHGAWVPLMLMYPEADIPVCQLSVQSHLDGTHHYKLGQALAPLKDEGVLIIGSGSATHPSNGTPPCSDGVAPWAAAFDSWLETALTNGSYEEVNKYETKAPNWKLAHPWPEHFYPLHVAMGAAGENSKAELIHNSWDGGIMSYGSYKFTST</sequence>
<keyword id="KW-0002">3D-structure</keyword>
<keyword id="KW-0963">Cytoplasm</keyword>
<keyword id="KW-0223">Dioxygenase</keyword>
<keyword id="KW-0479">Metal-binding</keyword>
<keyword id="KW-0560">Oxidoreductase</keyword>
<keyword id="KW-0862">Zinc</keyword>
<accession>Q70FG7</accession>
<comment type="function">
    <text evidence="2">Opens the cyclic ring of dihydroxy-phenylalanine (DOPA) between carbons 4 and 5, thus producing an unstable seco-DOPA that rearranges nonenzymatically to betalamic acid. Produces mainly (S)-betalamic acid.</text>
</comment>
<comment type="catalytic activity">
    <reaction evidence="2">
        <text>L-dopa + O2 = 4-(L-alanin-3-yl)-2-hydroxy-cis,cis-muconate 6-semialdehyde + H(+)</text>
        <dbReference type="Rhea" id="RHEA:21220"/>
        <dbReference type="ChEBI" id="CHEBI:15378"/>
        <dbReference type="ChEBI" id="CHEBI:15379"/>
        <dbReference type="ChEBI" id="CHEBI:57504"/>
        <dbReference type="ChEBI" id="CHEBI:57639"/>
        <dbReference type="EC" id="1.13.11.29"/>
    </reaction>
</comment>
<comment type="cofactor">
    <cofactor evidence="1">
        <name>Zn(2+)</name>
        <dbReference type="ChEBI" id="CHEBI:29105"/>
    </cofactor>
    <text evidence="1">Binds 1 zinc ion per subunit.</text>
</comment>
<comment type="biophysicochemical properties">
    <kinetics>
        <KM evidence="2">6.9 mM for L-dopa</KM>
        <Vmax evidence="2">1.2 umol/min/mg enzyme</Vmax>
        <text>kcat is 0.095 sec(-1) for L-dopa.</text>
    </kinetics>
    <phDependence>
        <text evidence="2">Optimum pH is 8.5.</text>
    </phDependence>
</comment>
<comment type="pathway">
    <text>Pigment biosynthesis; betalain biosynthesis.</text>
</comment>
<comment type="subunit">
    <text evidence="2">Monomer.</text>
</comment>
<comment type="subcellular location">
    <subcellularLocation>
        <location evidence="3">Cytoplasm</location>
    </subcellularLocation>
</comment>
<comment type="miscellaneous">
    <text evidence="4">Supplementation with Fe(2+) in the reaction medium is not necessary to detect activity in contrast to the results found for the M.jalapa enzyme (AC B6F0W8) (PubMed:22270561).</text>
</comment>
<comment type="similarity">
    <text evidence="3">Belongs to the DODA-type extradiol aromatic ring-opening dioxygenase family.</text>
</comment>
<organism>
    <name type="scientific">Beta vulgaris</name>
    <name type="common">Sugar beet</name>
    <dbReference type="NCBI Taxonomy" id="161934"/>
    <lineage>
        <taxon>Eukaryota</taxon>
        <taxon>Viridiplantae</taxon>
        <taxon>Streptophyta</taxon>
        <taxon>Embryophyta</taxon>
        <taxon>Tracheophyta</taxon>
        <taxon>Spermatophyta</taxon>
        <taxon>Magnoliopsida</taxon>
        <taxon>eudicotyledons</taxon>
        <taxon>Gunneridae</taxon>
        <taxon>Pentapetalae</taxon>
        <taxon>Caryophyllales</taxon>
        <taxon>Chenopodiaceae</taxon>
        <taxon>Betoideae</taxon>
        <taxon>Beta</taxon>
    </lineage>
</organism>
<protein>
    <recommendedName>
        <fullName>4,5-DOPA dioxygenase extradiol</fullName>
        <ecNumber>1.13.11.29</ecNumber>
    </recommendedName>
</protein>
<gene>
    <name type="primary">DODA</name>
</gene>